<organism>
    <name type="scientific">Salmonella paratyphi C (strain RKS4594)</name>
    <dbReference type="NCBI Taxonomy" id="476213"/>
    <lineage>
        <taxon>Bacteria</taxon>
        <taxon>Pseudomonadati</taxon>
        <taxon>Pseudomonadota</taxon>
        <taxon>Gammaproteobacteria</taxon>
        <taxon>Enterobacterales</taxon>
        <taxon>Enterobacteriaceae</taxon>
        <taxon>Salmonella</taxon>
    </lineage>
</organism>
<keyword id="KW-0997">Cell inner membrane</keyword>
<keyword id="KW-1003">Cell membrane</keyword>
<keyword id="KW-0472">Membrane</keyword>
<keyword id="KW-0812">Transmembrane</keyword>
<keyword id="KW-1133">Transmembrane helix</keyword>
<keyword id="KW-0813">Transport</keyword>
<sequence>MFYWILLALAIATEITGTLSMKWASVGNGNAGFILMLVMITLSYIFLSFAVKKIALGVAYALWEGIGILFITIFSVLLFDEALSTMKIAGLLTLVAGIVLIKSGTRKPGKPVKEATRATI</sequence>
<comment type="function">
    <text evidence="1">Catalyzes the excretion of spermidine.</text>
</comment>
<comment type="subunit">
    <text evidence="1">Forms a complex with MdtI.</text>
</comment>
<comment type="subcellular location">
    <subcellularLocation>
        <location evidence="1">Cell inner membrane</location>
        <topology evidence="1">Multi-pass membrane protein</topology>
    </subcellularLocation>
</comment>
<comment type="similarity">
    <text evidence="1">Belongs to the drug/metabolite transporter (DMT) superfamily. Small multidrug resistance (SMR) (TC 2.A.7.1) family. MdtJ subfamily.</text>
</comment>
<gene>
    <name evidence="1" type="primary">mdtJ</name>
    <name type="ordered locus">SPC_2248</name>
</gene>
<proteinExistence type="inferred from homology"/>
<dbReference type="EMBL" id="CP000857">
    <property type="protein sequence ID" value="ACN46368.1"/>
    <property type="molecule type" value="Genomic_DNA"/>
</dbReference>
<dbReference type="RefSeq" id="WP_000500278.1">
    <property type="nucleotide sequence ID" value="NC_012125.1"/>
</dbReference>
<dbReference type="SMR" id="C0Q4Y5"/>
<dbReference type="KEGG" id="sei:SPC_2248"/>
<dbReference type="HOGENOM" id="CLU_133067_0_0_6"/>
<dbReference type="Proteomes" id="UP000001599">
    <property type="component" value="Chromosome"/>
</dbReference>
<dbReference type="GO" id="GO:0005886">
    <property type="term" value="C:plasma membrane"/>
    <property type="evidence" value="ECO:0007669"/>
    <property type="project" value="UniProtKB-SubCell"/>
</dbReference>
<dbReference type="GO" id="GO:0015199">
    <property type="term" value="F:amino-acid betaine transmembrane transporter activity"/>
    <property type="evidence" value="ECO:0007669"/>
    <property type="project" value="TreeGrafter"/>
</dbReference>
<dbReference type="GO" id="GO:0015297">
    <property type="term" value="F:antiporter activity"/>
    <property type="evidence" value="ECO:0007669"/>
    <property type="project" value="TreeGrafter"/>
</dbReference>
<dbReference type="GO" id="GO:0015220">
    <property type="term" value="F:choline transmembrane transporter activity"/>
    <property type="evidence" value="ECO:0007669"/>
    <property type="project" value="TreeGrafter"/>
</dbReference>
<dbReference type="GO" id="GO:0015606">
    <property type="term" value="F:spermidine transmembrane transporter activity"/>
    <property type="evidence" value="ECO:0007669"/>
    <property type="project" value="UniProtKB-UniRule"/>
</dbReference>
<dbReference type="GO" id="GO:0031460">
    <property type="term" value="P:glycine betaine transport"/>
    <property type="evidence" value="ECO:0007669"/>
    <property type="project" value="TreeGrafter"/>
</dbReference>
<dbReference type="FunFam" id="1.10.3730.20:FF:000001">
    <property type="entry name" value="Quaternary ammonium compound resistance transporter SugE"/>
    <property type="match status" value="1"/>
</dbReference>
<dbReference type="Gene3D" id="1.10.3730.20">
    <property type="match status" value="1"/>
</dbReference>
<dbReference type="HAMAP" id="MF_01598">
    <property type="entry name" value="MdtJ"/>
    <property type="match status" value="1"/>
</dbReference>
<dbReference type="InterPro" id="IPR000390">
    <property type="entry name" value="Small_drug/metabolite_transptr"/>
</dbReference>
<dbReference type="InterPro" id="IPR045324">
    <property type="entry name" value="Small_multidrug_res"/>
</dbReference>
<dbReference type="InterPro" id="IPR023740">
    <property type="entry name" value="Spermidine_export_MdtJ"/>
</dbReference>
<dbReference type="NCBIfam" id="NF007767">
    <property type="entry name" value="PRK10452.1"/>
    <property type="match status" value="1"/>
</dbReference>
<dbReference type="PANTHER" id="PTHR30561">
    <property type="entry name" value="SMR FAMILY PROTON-DEPENDENT DRUG EFFLUX TRANSPORTER SUGE"/>
    <property type="match status" value="1"/>
</dbReference>
<dbReference type="PANTHER" id="PTHR30561:SF2">
    <property type="entry name" value="SPERMIDINE EXPORT PROTEIN MDTJ"/>
    <property type="match status" value="1"/>
</dbReference>
<dbReference type="Pfam" id="PF00893">
    <property type="entry name" value="Multi_Drug_Res"/>
    <property type="match status" value="1"/>
</dbReference>
<dbReference type="SUPFAM" id="SSF103481">
    <property type="entry name" value="Multidrug resistance efflux transporter EmrE"/>
    <property type="match status" value="1"/>
</dbReference>
<reference key="1">
    <citation type="journal article" date="2009" name="PLoS ONE">
        <title>Salmonella paratyphi C: genetic divergence from Salmonella choleraesuis and pathogenic convergence with Salmonella typhi.</title>
        <authorList>
            <person name="Liu W.-Q."/>
            <person name="Feng Y."/>
            <person name="Wang Y."/>
            <person name="Zou Q.-H."/>
            <person name="Chen F."/>
            <person name="Guo J.-T."/>
            <person name="Peng Y.-H."/>
            <person name="Jin Y."/>
            <person name="Li Y.-G."/>
            <person name="Hu S.-N."/>
            <person name="Johnston R.N."/>
            <person name="Liu G.-R."/>
            <person name="Liu S.-L."/>
        </authorList>
    </citation>
    <scope>NUCLEOTIDE SEQUENCE [LARGE SCALE GENOMIC DNA]</scope>
    <source>
        <strain>RKS4594</strain>
    </source>
</reference>
<protein>
    <recommendedName>
        <fullName evidence="1">Spermidine export protein MdtJ</fullName>
    </recommendedName>
</protein>
<feature type="chain" id="PRO_1000185775" description="Spermidine export protein MdtJ">
    <location>
        <begin position="1"/>
        <end position="120"/>
    </location>
</feature>
<feature type="transmembrane region" description="Helical" evidence="1">
    <location>
        <begin position="1"/>
        <end position="21"/>
    </location>
</feature>
<feature type="transmembrane region" description="Helical" evidence="1">
    <location>
        <begin position="31"/>
        <end position="51"/>
    </location>
</feature>
<feature type="transmembrane region" description="Helical" evidence="1">
    <location>
        <begin position="54"/>
        <end position="74"/>
    </location>
</feature>
<feature type="transmembrane region" description="Helical" evidence="1">
    <location>
        <begin position="81"/>
        <end position="101"/>
    </location>
</feature>
<name>MDTJ_SALPC</name>
<accession>C0Q4Y5</accession>
<evidence type="ECO:0000255" key="1">
    <source>
        <dbReference type="HAMAP-Rule" id="MF_01598"/>
    </source>
</evidence>